<gene>
    <name evidence="1" type="primary">sstT</name>
    <name type="ordered locus">HSM_1016</name>
</gene>
<evidence type="ECO:0000255" key="1">
    <source>
        <dbReference type="HAMAP-Rule" id="MF_01582"/>
    </source>
</evidence>
<name>SSTT_HISS2</name>
<sequence length="413" mass="43881">MNKSYLYSFFFHGSLVKRISVGLLLGLLLALIAPSLQGVLGFNLAEKAGFLGKIFVRSLRAVAPILVFLLVISAIANKQLGTKSNMKSIVVLYLLGTFLAALTSVLFSFALPTEIALKTQEGSLSPPNEVSEVLSTLVLNVVDNPINALFNANFIGILFWAIGLGIALRYASDTTKNVMNDFSEAVSRIVHFIISFAPIGVFGLVAETLTDKGLGALLDYMQLLVVLIGSMLFTAFVINPILVFWKIRRNPYPLVWTCVRESGLTAFLTRSSAANIPVNMELSKRLKLDEETYSVSIPLGANINMAGAAITITVLTLAAVHTLGIEVSFPTAVLLSVVASICACGASGVAGGSLLLIPLACSLFGIPNDIAAQVIGVGFVIGVLQDSTETALNSSTDVIFTAAVCWSEENKNS</sequence>
<reference key="1">
    <citation type="submission" date="2008-02" db="EMBL/GenBank/DDBJ databases">
        <title>Complete sequence of Haemophilus somnus 2336.</title>
        <authorList>
            <consortium name="US DOE Joint Genome Institute"/>
            <person name="Siddaramappa S."/>
            <person name="Duncan A.J."/>
            <person name="Challacombe J.F."/>
            <person name="Rainey D."/>
            <person name="Gillaspy A.F."/>
            <person name="Carson M."/>
            <person name="Gipson J."/>
            <person name="Gipson M."/>
            <person name="Bruce D."/>
            <person name="Detter J.C."/>
            <person name="Han C.S."/>
            <person name="Land M."/>
            <person name="Tapia R."/>
            <person name="Thompson L.S."/>
            <person name="Orvis J."/>
            <person name="Zaitshik J."/>
            <person name="Barnes G."/>
            <person name="Brettin T.S."/>
            <person name="Dyer D.W."/>
            <person name="Inzana T.J."/>
        </authorList>
    </citation>
    <scope>NUCLEOTIDE SEQUENCE [LARGE SCALE GENOMIC DNA]</scope>
    <source>
        <strain>2336</strain>
    </source>
</reference>
<keyword id="KW-0029">Amino-acid transport</keyword>
<keyword id="KW-0997">Cell inner membrane</keyword>
<keyword id="KW-1003">Cell membrane</keyword>
<keyword id="KW-0472">Membrane</keyword>
<keyword id="KW-0769">Symport</keyword>
<keyword id="KW-0812">Transmembrane</keyword>
<keyword id="KW-1133">Transmembrane helix</keyword>
<keyword id="KW-0813">Transport</keyword>
<comment type="function">
    <text evidence="1">Involved in the import of serine and threonine into the cell, with the concomitant import of sodium (symport system).</text>
</comment>
<comment type="catalytic activity">
    <reaction evidence="1">
        <text>L-serine(in) + Na(+)(in) = L-serine(out) + Na(+)(out)</text>
        <dbReference type="Rhea" id="RHEA:29575"/>
        <dbReference type="ChEBI" id="CHEBI:29101"/>
        <dbReference type="ChEBI" id="CHEBI:33384"/>
    </reaction>
    <physiologicalReaction direction="right-to-left" evidence="1">
        <dbReference type="Rhea" id="RHEA:29577"/>
    </physiologicalReaction>
</comment>
<comment type="catalytic activity">
    <reaction evidence="1">
        <text>L-threonine(in) + Na(+)(in) = L-threonine(out) + Na(+)(out)</text>
        <dbReference type="Rhea" id="RHEA:69999"/>
        <dbReference type="ChEBI" id="CHEBI:29101"/>
        <dbReference type="ChEBI" id="CHEBI:57926"/>
    </reaction>
    <physiologicalReaction direction="right-to-left" evidence="1">
        <dbReference type="Rhea" id="RHEA:70001"/>
    </physiologicalReaction>
</comment>
<comment type="subcellular location">
    <subcellularLocation>
        <location evidence="1">Cell inner membrane</location>
        <topology evidence="1">Multi-pass membrane protein</topology>
    </subcellularLocation>
</comment>
<comment type="similarity">
    <text evidence="1">Belongs to the dicarboxylate/amino acid:cation symporter (DAACS) (TC 2.A.23) family.</text>
</comment>
<feature type="chain" id="PRO_1000197551" description="Serine/threonine transporter SstT">
    <location>
        <begin position="1"/>
        <end position="413"/>
    </location>
</feature>
<feature type="transmembrane region" description="Helical" evidence="1">
    <location>
        <begin position="22"/>
        <end position="42"/>
    </location>
</feature>
<feature type="transmembrane region" description="Helical" evidence="1">
    <location>
        <begin position="61"/>
        <end position="81"/>
    </location>
</feature>
<feature type="transmembrane region" description="Helical" evidence="1">
    <location>
        <begin position="89"/>
        <end position="109"/>
    </location>
</feature>
<feature type="transmembrane region" description="Helical" evidence="1">
    <location>
        <begin position="148"/>
        <end position="168"/>
    </location>
</feature>
<feature type="transmembrane region" description="Helical" evidence="1">
    <location>
        <begin position="189"/>
        <end position="209"/>
    </location>
</feature>
<feature type="transmembrane region" description="Helical" evidence="1">
    <location>
        <begin position="224"/>
        <end position="244"/>
    </location>
</feature>
<feature type="transmembrane region" description="Helical" evidence="1">
    <location>
        <begin position="305"/>
        <end position="325"/>
    </location>
</feature>
<feature type="transmembrane region" description="Helical" evidence="1">
    <location>
        <begin position="337"/>
        <end position="357"/>
    </location>
</feature>
<feature type="transmembrane region" description="Helical" evidence="1">
    <location>
        <begin position="363"/>
        <end position="383"/>
    </location>
</feature>
<dbReference type="EMBL" id="CP000947">
    <property type="protein sequence ID" value="ACA30727.1"/>
    <property type="molecule type" value="Genomic_DNA"/>
</dbReference>
<dbReference type="RefSeq" id="WP_011609246.1">
    <property type="nucleotide sequence ID" value="NC_010519.1"/>
</dbReference>
<dbReference type="SMR" id="B0UT97"/>
<dbReference type="STRING" id="228400.HSM_1016"/>
<dbReference type="GeneID" id="31487315"/>
<dbReference type="KEGG" id="hsm:HSM_1016"/>
<dbReference type="HOGENOM" id="CLU_044581_0_0_6"/>
<dbReference type="GO" id="GO:0005886">
    <property type="term" value="C:plasma membrane"/>
    <property type="evidence" value="ECO:0007669"/>
    <property type="project" value="UniProtKB-SubCell"/>
</dbReference>
<dbReference type="GO" id="GO:0005295">
    <property type="term" value="F:neutral L-amino acid:sodium symporter activity"/>
    <property type="evidence" value="ECO:0007669"/>
    <property type="project" value="TreeGrafter"/>
</dbReference>
<dbReference type="GO" id="GO:0032329">
    <property type="term" value="P:serine transport"/>
    <property type="evidence" value="ECO:0007669"/>
    <property type="project" value="InterPro"/>
</dbReference>
<dbReference type="GO" id="GO:0015826">
    <property type="term" value="P:threonine transport"/>
    <property type="evidence" value="ECO:0007669"/>
    <property type="project" value="InterPro"/>
</dbReference>
<dbReference type="FunFam" id="1.10.3860.10:FF:000003">
    <property type="entry name" value="Serine/threonine transporter sstT"/>
    <property type="match status" value="1"/>
</dbReference>
<dbReference type="Gene3D" id="1.10.3860.10">
    <property type="entry name" value="Sodium:dicarboxylate symporter"/>
    <property type="match status" value="1"/>
</dbReference>
<dbReference type="HAMAP" id="MF_01582">
    <property type="entry name" value="Ser_Thr_transp_SstT"/>
    <property type="match status" value="1"/>
</dbReference>
<dbReference type="InterPro" id="IPR001991">
    <property type="entry name" value="Na-dicarboxylate_symporter"/>
</dbReference>
<dbReference type="InterPro" id="IPR036458">
    <property type="entry name" value="Na:dicarbo_symporter_sf"/>
</dbReference>
<dbReference type="InterPro" id="IPR023025">
    <property type="entry name" value="Ser_Thr_transp_SstT"/>
</dbReference>
<dbReference type="NCBIfam" id="NF010151">
    <property type="entry name" value="PRK13628.1"/>
    <property type="match status" value="1"/>
</dbReference>
<dbReference type="PANTHER" id="PTHR42865">
    <property type="entry name" value="PROTON/GLUTAMATE-ASPARTATE SYMPORTER"/>
    <property type="match status" value="1"/>
</dbReference>
<dbReference type="PANTHER" id="PTHR42865:SF8">
    <property type="entry name" value="SERINE_THREONINE TRANSPORTER SSTT"/>
    <property type="match status" value="1"/>
</dbReference>
<dbReference type="Pfam" id="PF00375">
    <property type="entry name" value="SDF"/>
    <property type="match status" value="1"/>
</dbReference>
<dbReference type="PRINTS" id="PR00173">
    <property type="entry name" value="EDTRNSPORT"/>
</dbReference>
<dbReference type="SUPFAM" id="SSF118215">
    <property type="entry name" value="Proton glutamate symport protein"/>
    <property type="match status" value="1"/>
</dbReference>
<proteinExistence type="inferred from homology"/>
<protein>
    <recommendedName>
        <fullName evidence="1">Serine/threonine transporter SstT</fullName>
    </recommendedName>
    <alternativeName>
        <fullName evidence="1">Na(+)/serine-threonine symporter</fullName>
    </alternativeName>
</protein>
<accession>B0UT97</accession>
<organism>
    <name type="scientific">Histophilus somni (strain 2336)</name>
    <name type="common">Haemophilus somnus</name>
    <dbReference type="NCBI Taxonomy" id="228400"/>
    <lineage>
        <taxon>Bacteria</taxon>
        <taxon>Pseudomonadati</taxon>
        <taxon>Pseudomonadota</taxon>
        <taxon>Gammaproteobacteria</taxon>
        <taxon>Pasteurellales</taxon>
        <taxon>Pasteurellaceae</taxon>
        <taxon>Histophilus</taxon>
    </lineage>
</organism>